<sequence length="421" mass="48004">MDLEAKVKKMGLGHEQGFGAPCLKCKEKCEGFELHFWRKICRNCKCGQEEHDVLLSNEEDRKVGKLFEDTKYTTLIAKLKSDGIPMYKRNVMILTNPVAAKKNVSINTVTYEWAPPVQNQALARQYMQMLPKEKQPVAGSEGAQYRKKQLAKQLPAHDQDPSKCHELSPKEVKEMEQFVKKYKSEALGVGDVKLPRDMNTQGPNRMYIPGGDRSTTTAVGAMEDKSAEHKRTQYSCYCCKLSMKEGDPAIYAERAGYDKLWHPACFVCSACHELLVDMIYFWKNGKLYCGRHYCDSEKPRCAGCDELIFSNEYTQAENQNWHLKHFCCFDCDNILAGEIYVMVNDKPVCKPCYVKNHAVVCQGCHNAIDPEVQRVSYNNFSWHASTECFLCSCCSRCLIGQKFMPVEGMVFCSVECKKMMS</sequence>
<evidence type="ECO:0000250" key="1"/>
<evidence type="ECO:0000255" key="2">
    <source>
        <dbReference type="PROSITE-ProRule" id="PRU00125"/>
    </source>
</evidence>
<evidence type="ECO:0000255" key="3">
    <source>
        <dbReference type="PROSITE-ProRule" id="PRU00636"/>
    </source>
</evidence>
<evidence type="ECO:0000256" key="4">
    <source>
        <dbReference type="SAM" id="MobiDB-lite"/>
    </source>
</evidence>
<evidence type="ECO:0000305" key="5"/>
<protein>
    <recommendedName>
        <fullName>Testin</fullName>
    </recommendedName>
</protein>
<accession>Q09YK3</accession>
<proteinExistence type="inferred from homology"/>
<feature type="chain" id="PRO_0000260330" description="Testin">
    <location>
        <begin position="1"/>
        <end position="421"/>
    </location>
</feature>
<feature type="domain" description="PET" evidence="3">
    <location>
        <begin position="92"/>
        <end position="199"/>
    </location>
</feature>
<feature type="domain" description="LIM zinc-binding 1" evidence="2">
    <location>
        <begin position="234"/>
        <end position="297"/>
    </location>
</feature>
<feature type="domain" description="LIM zinc-binding 2" evidence="2">
    <location>
        <begin position="299"/>
        <end position="359"/>
    </location>
</feature>
<feature type="domain" description="LIM zinc-binding 3" evidence="2">
    <location>
        <begin position="362"/>
        <end position="421"/>
    </location>
</feature>
<feature type="region of interest" description="Disordered" evidence="4">
    <location>
        <begin position="133"/>
        <end position="164"/>
    </location>
</feature>
<feature type="region of interest" description="Disordered" evidence="4">
    <location>
        <begin position="193"/>
        <end position="213"/>
    </location>
</feature>
<feature type="compositionally biased region" description="Basic and acidic residues" evidence="4">
    <location>
        <begin position="155"/>
        <end position="164"/>
    </location>
</feature>
<gene>
    <name type="primary">TES</name>
</gene>
<dbReference type="EMBL" id="DP000178">
    <property type="protein sequence ID" value="ABI75277.1"/>
    <property type="molecule type" value="Genomic_DNA"/>
</dbReference>
<dbReference type="SMR" id="Q09YK3"/>
<dbReference type="GO" id="GO:0005737">
    <property type="term" value="C:cytoplasm"/>
    <property type="evidence" value="ECO:0000250"/>
    <property type="project" value="UniProtKB"/>
</dbReference>
<dbReference type="GO" id="GO:0005925">
    <property type="term" value="C:focal adhesion"/>
    <property type="evidence" value="ECO:0007669"/>
    <property type="project" value="UniProtKB-SubCell"/>
</dbReference>
<dbReference type="GO" id="GO:0008270">
    <property type="term" value="F:zinc ion binding"/>
    <property type="evidence" value="ECO:0000250"/>
    <property type="project" value="UniProtKB"/>
</dbReference>
<dbReference type="GO" id="GO:0008285">
    <property type="term" value="P:negative regulation of cell population proliferation"/>
    <property type="evidence" value="ECO:0000250"/>
    <property type="project" value="UniProtKB"/>
</dbReference>
<dbReference type="CDD" id="cd09413">
    <property type="entry name" value="LIM1_Testin"/>
    <property type="match status" value="1"/>
</dbReference>
<dbReference type="CDD" id="cd09416">
    <property type="entry name" value="LIM2_Testin"/>
    <property type="match status" value="1"/>
</dbReference>
<dbReference type="CDD" id="cd09419">
    <property type="entry name" value="LIM3_Testin"/>
    <property type="match status" value="1"/>
</dbReference>
<dbReference type="CDD" id="cd09829">
    <property type="entry name" value="PET_testin"/>
    <property type="match status" value="1"/>
</dbReference>
<dbReference type="FunFam" id="2.10.110.10:FF:000061">
    <property type="entry name" value="Testin"/>
    <property type="match status" value="1"/>
</dbReference>
<dbReference type="FunFam" id="2.10.110.10:FF:000065">
    <property type="entry name" value="Testin"/>
    <property type="match status" value="1"/>
</dbReference>
<dbReference type="FunFam" id="2.10.110.10:FF:000005">
    <property type="entry name" value="Testin isoform 1"/>
    <property type="match status" value="1"/>
</dbReference>
<dbReference type="Gene3D" id="2.10.110.10">
    <property type="entry name" value="Cysteine Rich Protein"/>
    <property type="match status" value="3"/>
</dbReference>
<dbReference type="InterPro" id="IPR034958">
    <property type="entry name" value="LIM1_Testin"/>
</dbReference>
<dbReference type="InterPro" id="IPR034959">
    <property type="entry name" value="LIM2_Testin"/>
</dbReference>
<dbReference type="InterPro" id="IPR034960">
    <property type="entry name" value="LIM3_Testin"/>
</dbReference>
<dbReference type="InterPro" id="IPR010442">
    <property type="entry name" value="PET_domain"/>
</dbReference>
<dbReference type="InterPro" id="IPR033724">
    <property type="entry name" value="PET_testin"/>
</dbReference>
<dbReference type="InterPro" id="IPR047120">
    <property type="entry name" value="Pk/Esn/Tes"/>
</dbReference>
<dbReference type="InterPro" id="IPR001781">
    <property type="entry name" value="Znf_LIM"/>
</dbReference>
<dbReference type="PANTHER" id="PTHR24211">
    <property type="entry name" value="LIM DOMAIN-CONTAINING PROTEIN"/>
    <property type="match status" value="1"/>
</dbReference>
<dbReference type="PANTHER" id="PTHR24211:SF1">
    <property type="entry name" value="TESTIN"/>
    <property type="match status" value="1"/>
</dbReference>
<dbReference type="Pfam" id="PF00412">
    <property type="entry name" value="LIM"/>
    <property type="match status" value="3"/>
</dbReference>
<dbReference type="Pfam" id="PF06297">
    <property type="entry name" value="PET"/>
    <property type="match status" value="1"/>
</dbReference>
<dbReference type="SMART" id="SM00132">
    <property type="entry name" value="LIM"/>
    <property type="match status" value="3"/>
</dbReference>
<dbReference type="SUPFAM" id="SSF57716">
    <property type="entry name" value="Glucocorticoid receptor-like (DNA-binding domain)"/>
    <property type="match status" value="2"/>
</dbReference>
<dbReference type="PROSITE" id="PS00478">
    <property type="entry name" value="LIM_DOMAIN_1"/>
    <property type="match status" value="2"/>
</dbReference>
<dbReference type="PROSITE" id="PS50023">
    <property type="entry name" value="LIM_DOMAIN_2"/>
    <property type="match status" value="3"/>
</dbReference>
<dbReference type="PROSITE" id="PS51303">
    <property type="entry name" value="PET"/>
    <property type="match status" value="1"/>
</dbReference>
<name>TES_MUNMU</name>
<comment type="function">
    <text evidence="1">Scaffold protein that may play a role in cell adhesion, cell spreading and in the reorganization of the actin cytoskeleton. Plays a role in the regulation of cell proliferation. May act as a tumor suppressor (By similarity).</text>
</comment>
<comment type="subunit">
    <text evidence="1">Interacts via LIM domain 1 with ZYX. Interacts (via LIM domain 3) with ENAH and VASP. Interacts with ALKBH4, talin, actin, alpha-actinin, GRIP1 and PXN (By similarity). Interacts (via LIM domain 2) with ACTL7A (via N-terminus). Heterodimer with ACTL7A; the heterodimer interacts with ENAH to form a heterotrimer (By similarity).</text>
</comment>
<comment type="subcellular location">
    <subcellularLocation>
        <location evidence="1">Cytoplasm</location>
    </subcellularLocation>
    <subcellularLocation>
        <location evidence="1">Cell junction</location>
        <location evidence="1">Focal adhesion</location>
    </subcellularLocation>
    <text evidence="1">Detected along actin stress fibers.</text>
</comment>
<comment type="domain">
    <text evidence="1">The N-terminal and the C-terminal halves of the protein can associate with each other, thereby hindering interactions with ZYX.</text>
</comment>
<comment type="similarity">
    <text evidence="5">Belongs to the prickle / espinas / testin family.</text>
</comment>
<keyword id="KW-0965">Cell junction</keyword>
<keyword id="KW-0963">Cytoplasm</keyword>
<keyword id="KW-0440">LIM domain</keyword>
<keyword id="KW-0479">Metal-binding</keyword>
<keyword id="KW-0677">Repeat</keyword>
<keyword id="KW-0862">Zinc</keyword>
<organism>
    <name type="scientific">Muntiacus muntjak</name>
    <name type="common">Barking deer</name>
    <name type="synonym">Indian muntjac</name>
    <dbReference type="NCBI Taxonomy" id="9888"/>
    <lineage>
        <taxon>Eukaryota</taxon>
        <taxon>Metazoa</taxon>
        <taxon>Chordata</taxon>
        <taxon>Craniata</taxon>
        <taxon>Vertebrata</taxon>
        <taxon>Euteleostomi</taxon>
        <taxon>Mammalia</taxon>
        <taxon>Eutheria</taxon>
        <taxon>Laurasiatheria</taxon>
        <taxon>Artiodactyla</taxon>
        <taxon>Ruminantia</taxon>
        <taxon>Pecora</taxon>
        <taxon>Cervidae</taxon>
        <taxon>Muntiacinae</taxon>
        <taxon>Muntiacus</taxon>
    </lineage>
</organism>
<reference key="1">
    <citation type="submission" date="2006-09" db="EMBL/GenBank/DDBJ databases">
        <title>NISC comparative sequencing initiative.</title>
        <authorList>
            <person name="Antonellis A."/>
            <person name="Ayele K."/>
            <person name="Benjamin B."/>
            <person name="Blakesley R.W."/>
            <person name="Boakye A."/>
            <person name="Bouffard G.G."/>
            <person name="Brinkley C."/>
            <person name="Brooks S."/>
            <person name="Chu G."/>
            <person name="Coleman H."/>
            <person name="Engle J."/>
            <person name="Gestole M."/>
            <person name="Greene A."/>
            <person name="Guan X."/>
            <person name="Gupta J."/>
            <person name="Haghighi P."/>
            <person name="Han J."/>
            <person name="Hansen N."/>
            <person name="Ho S.-L."/>
            <person name="Hu P."/>
            <person name="Hunter G."/>
            <person name="Hurle B."/>
            <person name="Idol J.R."/>
            <person name="Kwong P."/>
            <person name="Laric P."/>
            <person name="Larson S."/>
            <person name="Lee-Lin S.-Q."/>
            <person name="Legaspi R."/>
            <person name="Madden M."/>
            <person name="Maduro Q.L."/>
            <person name="Maduro V.B."/>
            <person name="Margulies E.H."/>
            <person name="Masiello C."/>
            <person name="Maskeri B."/>
            <person name="McDowell J."/>
            <person name="Mojidi H.A."/>
            <person name="Mullikin J.C."/>
            <person name="Oestreicher J.S."/>
            <person name="Park M."/>
            <person name="Portnoy M.E."/>
            <person name="Prasad A."/>
            <person name="Puri O."/>
            <person name="Reddix-Dugue N."/>
            <person name="Schandler K."/>
            <person name="Schueler M.G."/>
            <person name="Sison C."/>
            <person name="Stantripop S."/>
            <person name="Stephen E."/>
            <person name="Taye A."/>
            <person name="Thomas J.W."/>
            <person name="Thomas P.J."/>
            <person name="Tsipouri V."/>
            <person name="Ung L."/>
            <person name="Vogt J.L."/>
            <person name="Wetherby K.D."/>
            <person name="Young A."/>
            <person name="Green E.D."/>
        </authorList>
    </citation>
    <scope>NUCLEOTIDE SEQUENCE [LARGE SCALE GENOMIC DNA]</scope>
</reference>